<accession>P83956</accession>
<reference evidence="2" key="1">
    <citation type="journal article" date="2003" name="Biochem. Biophys. Res. Commun.">
        <title>Purification of a trypsin-stable lectin with antiproliferative and HIV-1 reverse transcriptase inhibitory activity.</title>
        <authorList>
            <person name="Wong J.H."/>
            <person name="Ng T.B."/>
        </authorList>
    </citation>
    <scope>PROTEIN SEQUENCE</scope>
    <scope>FUNCTION</scope>
    <scope>SUBUNIT</scope>
    <scope>INDUCTION</scope>
    <source>
        <strain evidence="1">cv. Ground bean</strain>
        <tissue evidence="1">Seed</tissue>
    </source>
</reference>
<name>LG31_VIGUS</name>
<organism>
    <name type="scientific">Vigna unguiculata subsp. sesquipedalis</name>
    <name type="common">Yard-Long bean</name>
    <name type="synonym">Vigna sesquipedalis</name>
    <dbReference type="NCBI Taxonomy" id="138955"/>
    <lineage>
        <taxon>Eukaryota</taxon>
        <taxon>Viridiplantae</taxon>
        <taxon>Streptophyta</taxon>
        <taxon>Embryophyta</taxon>
        <taxon>Tracheophyta</taxon>
        <taxon>Spermatophyta</taxon>
        <taxon>Magnoliopsida</taxon>
        <taxon>eudicotyledons</taxon>
        <taxon>Gunneridae</taxon>
        <taxon>Pentapetalae</taxon>
        <taxon>rosids</taxon>
        <taxon>fabids</taxon>
        <taxon>Fabales</taxon>
        <taxon>Fabaceae</taxon>
        <taxon>Papilionoideae</taxon>
        <taxon>50 kb inversion clade</taxon>
        <taxon>NPAAA clade</taxon>
        <taxon>indigoferoid/millettioid clade</taxon>
        <taxon>Phaseoleae</taxon>
        <taxon>Vigna</taxon>
    </lineage>
</organism>
<feature type="chain" id="PRO_0000105115" description="Lectin 31 kDa subunit">
    <location>
        <begin position="1"/>
        <end position="15" status="greater than"/>
    </location>
</feature>
<feature type="glycosylation site" description="N-linked (GlcNAc...) asparagine" evidence="2">
    <location>
        <position position="2"/>
    </location>
</feature>
<feature type="non-terminal residue">
    <location>
        <position position="15"/>
    </location>
</feature>
<keyword id="KW-0903">Direct protein sequencing</keyword>
<keyword id="KW-0325">Glycoprotein</keyword>
<keyword id="KW-0348">Hemagglutinin</keyword>
<keyword id="KW-0430">Lectin</keyword>
<evidence type="ECO:0000269" key="1">
    <source>
    </source>
</evidence>
<evidence type="ECO:0000305" key="2"/>
<proteinExistence type="evidence at protein level"/>
<comment type="function">
    <text evidence="1">Trypsin-stable lectin with hemagglutinating activity. Has mitogenic activity on murine splenocytes. Inhibits HIV-reverse transcriptase.</text>
</comment>
<comment type="subunit">
    <text evidence="1">Heterodimer of a 29 kDa and a 31 kDa subunit.</text>
</comment>
<comment type="induction">
    <text evidence="1">Hemagglutinating activity is inhibited by polygalacturonic acid.</text>
</comment>
<comment type="similarity">
    <text evidence="2">Belongs to the leguminous lectin family.</text>
</comment>
<sequence>ANQTYFNFQRFEETN</sequence>
<dbReference type="GO" id="GO:0030246">
    <property type="term" value="F:carbohydrate binding"/>
    <property type="evidence" value="ECO:0007669"/>
    <property type="project" value="UniProtKB-KW"/>
</dbReference>
<protein>
    <recommendedName>
        <fullName>Lectin 31 kDa subunit</fullName>
    </recommendedName>
    <alternativeName>
        <fullName>Hemagglutinin 31 kDa subunit</fullName>
    </alternativeName>
</protein>